<gene>
    <name type="ordered locus">Bmul_1054</name>
    <name type="ordered locus">BMULJ_02209</name>
</gene>
<feature type="chain" id="PRO_1000131104" description="UPF0246 protein Bmul_1054/BMULJ_02209">
    <location>
        <begin position="1"/>
        <end position="260"/>
    </location>
</feature>
<organism>
    <name type="scientific">Burkholderia multivorans (strain ATCC 17616 / 249)</name>
    <dbReference type="NCBI Taxonomy" id="395019"/>
    <lineage>
        <taxon>Bacteria</taxon>
        <taxon>Pseudomonadati</taxon>
        <taxon>Pseudomonadota</taxon>
        <taxon>Betaproteobacteria</taxon>
        <taxon>Burkholderiales</taxon>
        <taxon>Burkholderiaceae</taxon>
        <taxon>Burkholderia</taxon>
        <taxon>Burkholderia cepacia complex</taxon>
    </lineage>
</organism>
<accession>A9AG13</accession>
<evidence type="ECO:0000255" key="1">
    <source>
        <dbReference type="HAMAP-Rule" id="MF_00652"/>
    </source>
</evidence>
<reference key="1">
    <citation type="submission" date="2007-10" db="EMBL/GenBank/DDBJ databases">
        <title>Complete sequence of chromosome 1 of Burkholderia multivorans ATCC 17616.</title>
        <authorList>
            <person name="Copeland A."/>
            <person name="Lucas S."/>
            <person name="Lapidus A."/>
            <person name="Barry K."/>
            <person name="Glavina del Rio T."/>
            <person name="Dalin E."/>
            <person name="Tice H."/>
            <person name="Pitluck S."/>
            <person name="Chain P."/>
            <person name="Malfatti S."/>
            <person name="Shin M."/>
            <person name="Vergez L."/>
            <person name="Schmutz J."/>
            <person name="Larimer F."/>
            <person name="Land M."/>
            <person name="Hauser L."/>
            <person name="Kyrpides N."/>
            <person name="Kim E."/>
            <person name="Tiedje J."/>
            <person name="Richardson P."/>
        </authorList>
    </citation>
    <scope>NUCLEOTIDE SEQUENCE [LARGE SCALE GENOMIC DNA]</scope>
    <source>
        <strain>ATCC 17616 / 249</strain>
    </source>
</reference>
<reference key="2">
    <citation type="submission" date="2007-04" db="EMBL/GenBank/DDBJ databases">
        <title>Complete genome sequence of Burkholderia multivorans ATCC 17616.</title>
        <authorList>
            <person name="Ohtsubo Y."/>
            <person name="Yamashita A."/>
            <person name="Kurokawa K."/>
            <person name="Takami H."/>
            <person name="Yuhara S."/>
            <person name="Nishiyama E."/>
            <person name="Endo R."/>
            <person name="Miyazaki R."/>
            <person name="Ono A."/>
            <person name="Yano K."/>
            <person name="Ito M."/>
            <person name="Sota M."/>
            <person name="Yuji N."/>
            <person name="Hattori M."/>
            <person name="Tsuda M."/>
        </authorList>
    </citation>
    <scope>NUCLEOTIDE SEQUENCE [LARGE SCALE GENOMIC DNA]</scope>
    <source>
        <strain>ATCC 17616 / 249</strain>
    </source>
</reference>
<comment type="similarity">
    <text evidence="1">Belongs to the UPF0246 family.</text>
</comment>
<dbReference type="EMBL" id="CP000868">
    <property type="protein sequence ID" value="ABX14745.1"/>
    <property type="molecule type" value="Genomic_DNA"/>
</dbReference>
<dbReference type="EMBL" id="AP009385">
    <property type="protein sequence ID" value="BAG44105.1"/>
    <property type="molecule type" value="Genomic_DNA"/>
</dbReference>
<dbReference type="RefSeq" id="WP_006410116.1">
    <property type="nucleotide sequence ID" value="NC_010084.1"/>
</dbReference>
<dbReference type="SMR" id="A9AG13"/>
<dbReference type="STRING" id="395019.BMULJ_02209"/>
<dbReference type="GeneID" id="89570754"/>
<dbReference type="KEGG" id="bmj:BMULJ_02209"/>
<dbReference type="KEGG" id="bmu:Bmul_1054"/>
<dbReference type="eggNOG" id="COG3022">
    <property type="taxonomic scope" value="Bacteria"/>
</dbReference>
<dbReference type="HOGENOM" id="CLU_061989_0_0_4"/>
<dbReference type="Proteomes" id="UP000008815">
    <property type="component" value="Chromosome 1"/>
</dbReference>
<dbReference type="GO" id="GO:0005829">
    <property type="term" value="C:cytosol"/>
    <property type="evidence" value="ECO:0007669"/>
    <property type="project" value="TreeGrafter"/>
</dbReference>
<dbReference type="GO" id="GO:0033194">
    <property type="term" value="P:response to hydroperoxide"/>
    <property type="evidence" value="ECO:0007669"/>
    <property type="project" value="TreeGrafter"/>
</dbReference>
<dbReference type="HAMAP" id="MF_00652">
    <property type="entry name" value="UPF0246"/>
    <property type="match status" value="1"/>
</dbReference>
<dbReference type="InterPro" id="IPR005583">
    <property type="entry name" value="YaaA"/>
</dbReference>
<dbReference type="NCBIfam" id="NF002541">
    <property type="entry name" value="PRK02101.1-1"/>
    <property type="match status" value="1"/>
</dbReference>
<dbReference type="NCBIfam" id="NF002542">
    <property type="entry name" value="PRK02101.1-3"/>
    <property type="match status" value="1"/>
</dbReference>
<dbReference type="PANTHER" id="PTHR30283:SF4">
    <property type="entry name" value="PEROXIDE STRESS RESISTANCE PROTEIN YAAA"/>
    <property type="match status" value="1"/>
</dbReference>
<dbReference type="PANTHER" id="PTHR30283">
    <property type="entry name" value="PEROXIDE STRESS RESPONSE PROTEIN YAAA"/>
    <property type="match status" value="1"/>
</dbReference>
<dbReference type="Pfam" id="PF03883">
    <property type="entry name" value="H2O2_YaaD"/>
    <property type="match status" value="1"/>
</dbReference>
<name>Y2209_BURM1</name>
<proteinExistence type="inferred from homology"/>
<sequence>MIIVLSPAKSLDYETPAHVQSYTQPAFVDDASELIAGLRKLSPQDIATLMDISDPLARLNYQRYADWSPIFTPANSKQAVLAFNGDVYEGFDAKSLSAADLDYAQQHVRVLSGLYGLLRPLDLLQPYRLEMGTRFANTRGKDLYAFWGDRITRALNEQLETRRGASRVLINCASTEYFKSVKPKLLAAPVITPVFEDWKGGRYKIISFHAKRARGLMARYVVENRIAEPKALQAFAMEGYAFDAAASNDSTYVYRRRVGE</sequence>
<protein>
    <recommendedName>
        <fullName evidence="1">UPF0246 protein Bmul_1054/BMULJ_02209</fullName>
    </recommendedName>
</protein>
<keyword id="KW-1185">Reference proteome</keyword>